<accession>Q4FRI4</accession>
<reference key="1">
    <citation type="journal article" date="2010" name="Appl. Environ. Microbiol.">
        <title>The genome sequence of Psychrobacter arcticus 273-4, a psychroactive Siberian permafrost bacterium, reveals mechanisms for adaptation to low-temperature growth.</title>
        <authorList>
            <person name="Ayala-del-Rio H.L."/>
            <person name="Chain P.S."/>
            <person name="Grzymski J.J."/>
            <person name="Ponder M.A."/>
            <person name="Ivanova N."/>
            <person name="Bergholz P.W."/>
            <person name="Di Bartolo G."/>
            <person name="Hauser L."/>
            <person name="Land M."/>
            <person name="Bakermans C."/>
            <person name="Rodrigues D."/>
            <person name="Klappenbach J."/>
            <person name="Zarka D."/>
            <person name="Larimer F."/>
            <person name="Richardson P."/>
            <person name="Murray A."/>
            <person name="Thomashow M."/>
            <person name="Tiedje J.M."/>
        </authorList>
    </citation>
    <scope>NUCLEOTIDE SEQUENCE [LARGE SCALE GENOMIC DNA]</scope>
    <source>
        <strain>DSM 17307 / VKM B-2377 / 273-4</strain>
    </source>
</reference>
<keyword id="KW-0012">Acyltransferase</keyword>
<keyword id="KW-0963">Cytoplasm</keyword>
<keyword id="KW-0441">Lipid A biosynthesis</keyword>
<keyword id="KW-0444">Lipid biosynthesis</keyword>
<keyword id="KW-0443">Lipid metabolism</keyword>
<keyword id="KW-1185">Reference proteome</keyword>
<keyword id="KW-0677">Repeat</keyword>
<keyword id="KW-0808">Transferase</keyword>
<comment type="function">
    <text evidence="1">Involved in the biosynthesis of lipid A, a phosphorylated glycolipid that anchors the lipopolysaccharide to the outer membrane of the cell.</text>
</comment>
<comment type="catalytic activity">
    <reaction evidence="1">
        <text>a (3R)-hydroxyacyl-[ACP] + UDP-N-acetyl-alpha-D-glucosamine = a UDP-3-O-[(3R)-3-hydroxyacyl]-N-acetyl-alpha-D-glucosamine + holo-[ACP]</text>
        <dbReference type="Rhea" id="RHEA:67812"/>
        <dbReference type="Rhea" id="RHEA-COMP:9685"/>
        <dbReference type="Rhea" id="RHEA-COMP:9945"/>
        <dbReference type="ChEBI" id="CHEBI:57705"/>
        <dbReference type="ChEBI" id="CHEBI:64479"/>
        <dbReference type="ChEBI" id="CHEBI:78827"/>
        <dbReference type="ChEBI" id="CHEBI:173225"/>
        <dbReference type="EC" id="2.3.1.129"/>
    </reaction>
</comment>
<comment type="pathway">
    <text evidence="1">Glycolipid biosynthesis; lipid IV(A) biosynthesis; lipid IV(A) from (3R)-3-hydroxytetradecanoyl-[acyl-carrier-protein] and UDP-N-acetyl-alpha-D-glucosamine: step 1/6.</text>
</comment>
<comment type="subunit">
    <text evidence="1">Homotrimer.</text>
</comment>
<comment type="subcellular location">
    <subcellularLocation>
        <location evidence="1">Cytoplasm</location>
    </subcellularLocation>
</comment>
<comment type="similarity">
    <text evidence="1">Belongs to the transferase hexapeptide repeat family. LpxA subfamily.</text>
</comment>
<protein>
    <recommendedName>
        <fullName evidence="1">Acyl-[acyl-carrier-protein]--UDP-N-acetylglucosamine O-acyltransferase</fullName>
        <shortName evidence="1">UDP-N-acetylglucosamine acyltransferase</shortName>
        <ecNumber evidence="1">2.3.1.129</ecNumber>
    </recommendedName>
</protein>
<organism>
    <name type="scientific">Psychrobacter arcticus (strain DSM 17307 / VKM B-2377 / 273-4)</name>
    <dbReference type="NCBI Taxonomy" id="259536"/>
    <lineage>
        <taxon>Bacteria</taxon>
        <taxon>Pseudomonadati</taxon>
        <taxon>Pseudomonadota</taxon>
        <taxon>Gammaproteobacteria</taxon>
        <taxon>Moraxellales</taxon>
        <taxon>Moraxellaceae</taxon>
        <taxon>Psychrobacter</taxon>
    </lineage>
</organism>
<feature type="chain" id="PRO_0000302592" description="Acyl-[acyl-carrier-protein]--UDP-N-acetylglucosamine O-acyltransferase">
    <location>
        <begin position="1"/>
        <end position="259"/>
    </location>
</feature>
<dbReference type="EC" id="2.3.1.129" evidence="1"/>
<dbReference type="EMBL" id="CP000082">
    <property type="protein sequence ID" value="AAZ19374.1"/>
    <property type="molecule type" value="Genomic_DNA"/>
</dbReference>
<dbReference type="RefSeq" id="WP_011280791.1">
    <property type="nucleotide sequence ID" value="NC_007204.1"/>
</dbReference>
<dbReference type="SMR" id="Q4FRI4"/>
<dbReference type="STRING" id="259536.Psyc_1526"/>
<dbReference type="KEGG" id="par:Psyc_1526"/>
<dbReference type="eggNOG" id="COG1043">
    <property type="taxonomic scope" value="Bacteria"/>
</dbReference>
<dbReference type="HOGENOM" id="CLU_061249_0_0_6"/>
<dbReference type="OrthoDB" id="9807278at2"/>
<dbReference type="UniPathway" id="UPA00359">
    <property type="reaction ID" value="UER00477"/>
</dbReference>
<dbReference type="Proteomes" id="UP000000546">
    <property type="component" value="Chromosome"/>
</dbReference>
<dbReference type="GO" id="GO:0005737">
    <property type="term" value="C:cytoplasm"/>
    <property type="evidence" value="ECO:0007669"/>
    <property type="project" value="UniProtKB-SubCell"/>
</dbReference>
<dbReference type="GO" id="GO:0016020">
    <property type="term" value="C:membrane"/>
    <property type="evidence" value="ECO:0007669"/>
    <property type="project" value="GOC"/>
</dbReference>
<dbReference type="GO" id="GO:0008780">
    <property type="term" value="F:acyl-[acyl-carrier-protein]-UDP-N-acetylglucosamine O-acyltransferase activity"/>
    <property type="evidence" value="ECO:0007669"/>
    <property type="project" value="UniProtKB-UniRule"/>
</dbReference>
<dbReference type="GO" id="GO:0009245">
    <property type="term" value="P:lipid A biosynthetic process"/>
    <property type="evidence" value="ECO:0007669"/>
    <property type="project" value="UniProtKB-UniRule"/>
</dbReference>
<dbReference type="CDD" id="cd03351">
    <property type="entry name" value="LbH_UDP-GlcNAc_AT"/>
    <property type="match status" value="1"/>
</dbReference>
<dbReference type="Gene3D" id="2.160.10.10">
    <property type="entry name" value="Hexapeptide repeat proteins"/>
    <property type="match status" value="1"/>
</dbReference>
<dbReference type="Gene3D" id="1.20.1180.10">
    <property type="entry name" value="Udp N-acetylglucosamine O-acyltransferase, C-terminal domain"/>
    <property type="match status" value="1"/>
</dbReference>
<dbReference type="HAMAP" id="MF_00387">
    <property type="entry name" value="LpxA"/>
    <property type="match status" value="1"/>
</dbReference>
<dbReference type="InterPro" id="IPR029098">
    <property type="entry name" value="Acetyltransf_C"/>
</dbReference>
<dbReference type="InterPro" id="IPR037157">
    <property type="entry name" value="Acetyltransf_C_sf"/>
</dbReference>
<dbReference type="InterPro" id="IPR001451">
    <property type="entry name" value="Hexapep"/>
</dbReference>
<dbReference type="InterPro" id="IPR018357">
    <property type="entry name" value="Hexapep_transf_CS"/>
</dbReference>
<dbReference type="InterPro" id="IPR010137">
    <property type="entry name" value="Lipid_A_LpxA"/>
</dbReference>
<dbReference type="InterPro" id="IPR011004">
    <property type="entry name" value="Trimer_LpxA-like_sf"/>
</dbReference>
<dbReference type="NCBIfam" id="TIGR01852">
    <property type="entry name" value="lipid_A_lpxA"/>
    <property type="match status" value="1"/>
</dbReference>
<dbReference type="NCBIfam" id="NF003657">
    <property type="entry name" value="PRK05289.1"/>
    <property type="match status" value="1"/>
</dbReference>
<dbReference type="PANTHER" id="PTHR43480">
    <property type="entry name" value="ACYL-[ACYL-CARRIER-PROTEIN]--UDP-N-ACETYLGLUCOSAMINE O-ACYLTRANSFERASE"/>
    <property type="match status" value="1"/>
</dbReference>
<dbReference type="PANTHER" id="PTHR43480:SF1">
    <property type="entry name" value="ACYL-[ACYL-CARRIER-PROTEIN]--UDP-N-ACETYLGLUCOSAMINE O-ACYLTRANSFERASE, MITOCHONDRIAL-RELATED"/>
    <property type="match status" value="1"/>
</dbReference>
<dbReference type="Pfam" id="PF13720">
    <property type="entry name" value="Acetyltransf_11"/>
    <property type="match status" value="1"/>
</dbReference>
<dbReference type="Pfam" id="PF00132">
    <property type="entry name" value="Hexapep"/>
    <property type="match status" value="1"/>
</dbReference>
<dbReference type="PIRSF" id="PIRSF000456">
    <property type="entry name" value="UDP-GlcNAc_acltr"/>
    <property type="match status" value="1"/>
</dbReference>
<dbReference type="SUPFAM" id="SSF51161">
    <property type="entry name" value="Trimeric LpxA-like enzymes"/>
    <property type="match status" value="1"/>
</dbReference>
<dbReference type="PROSITE" id="PS00101">
    <property type="entry name" value="HEXAPEP_TRANSFERASES"/>
    <property type="match status" value="2"/>
</dbReference>
<gene>
    <name evidence="1" type="primary">lpxA</name>
    <name type="ordered locus">Psyc_1526</name>
</gene>
<proteinExistence type="inferred from homology"/>
<name>LPXA_PSYA2</name>
<sequence>MSQIHPTALISPSATIDETATIGPYCIVGDEVTIGAHTVLHRHVVVTRLTRIGEHNQFYQFSSIGEDPQDLKYAGERTWLEIGDHNTIREACSLHRGTEQDGGLTKIGSHNLLMVNTHVAHDCLIGDHNVLANNVGVAGHVTIGNHIIVGGNSGIHQFCTIDDYSLVGGATLVLKDVAAFTMVSGNPAKAHGLNVEGMRRKGWSKDSIDVLRQAYRVVFRSGLTTVQALEVLKQDLLPKEQKIEFLIDSLQKSRRGVVR</sequence>
<evidence type="ECO:0000255" key="1">
    <source>
        <dbReference type="HAMAP-Rule" id="MF_00387"/>
    </source>
</evidence>